<protein>
    <recommendedName>
        <fullName evidence="1">UPF0225 protein PA14_50900</fullName>
    </recommendedName>
</protein>
<proteinExistence type="inferred from homology"/>
<organism>
    <name type="scientific">Pseudomonas aeruginosa (strain UCBPP-PA14)</name>
    <dbReference type="NCBI Taxonomy" id="208963"/>
    <lineage>
        <taxon>Bacteria</taxon>
        <taxon>Pseudomonadati</taxon>
        <taxon>Pseudomonadota</taxon>
        <taxon>Gammaproteobacteria</taxon>
        <taxon>Pseudomonadales</taxon>
        <taxon>Pseudomonadaceae</taxon>
        <taxon>Pseudomonas</taxon>
    </lineage>
</organism>
<reference key="1">
    <citation type="journal article" date="2006" name="Genome Biol.">
        <title>Genomic analysis reveals that Pseudomonas aeruginosa virulence is combinatorial.</title>
        <authorList>
            <person name="Lee D.G."/>
            <person name="Urbach J.M."/>
            <person name="Wu G."/>
            <person name="Liberati N.T."/>
            <person name="Feinbaum R.L."/>
            <person name="Miyata S."/>
            <person name="Diggins L.T."/>
            <person name="He J."/>
            <person name="Saucier M."/>
            <person name="Deziel E."/>
            <person name="Friedman L."/>
            <person name="Li L."/>
            <person name="Grills G."/>
            <person name="Montgomery K."/>
            <person name="Kucherlapati R."/>
            <person name="Rahme L.G."/>
            <person name="Ausubel F.M."/>
        </authorList>
    </citation>
    <scope>NUCLEOTIDE SEQUENCE [LARGE SCALE GENOMIC DNA]</scope>
    <source>
        <strain>UCBPP-PA14</strain>
    </source>
</reference>
<accession>Q02IK5</accession>
<feature type="chain" id="PRO_1000056732" description="UPF0225 protein PA14_50900">
    <location>
        <begin position="1"/>
        <end position="157"/>
    </location>
</feature>
<name>Y5090_PSEAB</name>
<dbReference type="EMBL" id="CP000438">
    <property type="protein sequence ID" value="ABJ10203.1"/>
    <property type="molecule type" value="Genomic_DNA"/>
</dbReference>
<dbReference type="RefSeq" id="WP_003123184.1">
    <property type="nucleotide sequence ID" value="NZ_CP034244.1"/>
</dbReference>
<dbReference type="SMR" id="Q02IK5"/>
<dbReference type="KEGG" id="pau:PA14_50900"/>
<dbReference type="PseudoCAP" id="PA14_50900"/>
<dbReference type="HOGENOM" id="CLU_099590_0_1_6"/>
<dbReference type="BioCyc" id="PAER208963:G1G74-4277-MONOMER"/>
<dbReference type="Proteomes" id="UP000000653">
    <property type="component" value="Chromosome"/>
</dbReference>
<dbReference type="Gene3D" id="3.10.450.50">
    <property type="match status" value="1"/>
</dbReference>
<dbReference type="HAMAP" id="MF_00612">
    <property type="entry name" value="UPF0225"/>
    <property type="match status" value="1"/>
</dbReference>
<dbReference type="InterPro" id="IPR032710">
    <property type="entry name" value="NTF2-like_dom_sf"/>
</dbReference>
<dbReference type="InterPro" id="IPR004027">
    <property type="entry name" value="SEC_C_motif"/>
</dbReference>
<dbReference type="InterPro" id="IPR023006">
    <property type="entry name" value="UPF0225"/>
</dbReference>
<dbReference type="InterPro" id="IPR048469">
    <property type="entry name" value="YchJ-like_M"/>
</dbReference>
<dbReference type="NCBIfam" id="NF001213">
    <property type="entry name" value="PRK00183.1"/>
    <property type="match status" value="1"/>
</dbReference>
<dbReference type="NCBIfam" id="NF002486">
    <property type="entry name" value="PRK01752.1"/>
    <property type="match status" value="1"/>
</dbReference>
<dbReference type="PANTHER" id="PTHR33747:SF1">
    <property type="entry name" value="ADENYLATE CYCLASE-ASSOCIATED CAP C-TERMINAL DOMAIN-CONTAINING PROTEIN"/>
    <property type="match status" value="1"/>
</dbReference>
<dbReference type="PANTHER" id="PTHR33747">
    <property type="entry name" value="UPF0225 PROTEIN SCO1677"/>
    <property type="match status" value="1"/>
</dbReference>
<dbReference type="Pfam" id="PF02810">
    <property type="entry name" value="SEC-C"/>
    <property type="match status" value="2"/>
</dbReference>
<dbReference type="Pfam" id="PF17775">
    <property type="entry name" value="YchJ_M-like"/>
    <property type="match status" value="1"/>
</dbReference>
<dbReference type="SUPFAM" id="SSF54427">
    <property type="entry name" value="NTF2-like"/>
    <property type="match status" value="1"/>
</dbReference>
<dbReference type="SUPFAM" id="SSF103642">
    <property type="entry name" value="Sec-C motif"/>
    <property type="match status" value="1"/>
</dbReference>
<evidence type="ECO:0000255" key="1">
    <source>
        <dbReference type="HAMAP-Rule" id="MF_00612"/>
    </source>
</evidence>
<gene>
    <name type="ordered locus">PA14_50900</name>
</gene>
<comment type="similarity">
    <text evidence="1">Belongs to the UPF0225 family.</text>
</comment>
<sequence length="157" mass="17217">MTQPTCPCGSGDPLDDCCGRYHQGHPAPTAEALMRSRYSAYALGLVDYLRDTTLPAQQAGLDLDGIRAWSHGSTWLGLEVENHEVLGGQPEHARVTFVARWHDAEGEHAHRECSGFVQRNGRWYFLDPTVALKLGRNDPCPCGAGGKLKKCCGPWIT</sequence>